<feature type="chain" id="PRO_0000208088" description="O-acetyltransferase OatA">
    <location>
        <begin position="1"/>
        <end position="603"/>
    </location>
</feature>
<feature type="transmembrane region" description="Helical" evidence="3">
    <location>
        <begin position="17"/>
        <end position="37"/>
    </location>
</feature>
<feature type="transmembrane region" description="Helical" evidence="3">
    <location>
        <begin position="45"/>
        <end position="65"/>
    </location>
</feature>
<feature type="transmembrane region" description="Helical" evidence="3">
    <location>
        <begin position="87"/>
        <end position="107"/>
    </location>
</feature>
<feature type="transmembrane region" description="Helical" evidence="3">
    <location>
        <begin position="148"/>
        <end position="168"/>
    </location>
</feature>
<feature type="transmembrane region" description="Helical" evidence="3">
    <location>
        <begin position="177"/>
        <end position="197"/>
    </location>
</feature>
<feature type="transmembrane region" description="Helical" evidence="3">
    <location>
        <begin position="211"/>
        <end position="231"/>
    </location>
</feature>
<feature type="transmembrane region" description="Helical" evidence="3">
    <location>
        <begin position="239"/>
        <end position="259"/>
    </location>
</feature>
<feature type="transmembrane region" description="Helical" evidence="3">
    <location>
        <begin position="268"/>
        <end position="288"/>
    </location>
</feature>
<feature type="transmembrane region" description="Helical" evidence="3">
    <location>
        <begin position="311"/>
        <end position="331"/>
    </location>
</feature>
<feature type="transmembrane region" description="Helical" evidence="3">
    <location>
        <begin position="333"/>
        <end position="353"/>
    </location>
</feature>
<feature type="transmembrane region" description="Helical" evidence="3">
    <location>
        <begin position="382"/>
        <end position="402"/>
    </location>
</feature>
<feature type="active site" evidence="2">
    <location>
        <position position="453"/>
    </location>
</feature>
<feature type="active site" evidence="2">
    <location>
        <position position="575"/>
    </location>
</feature>
<feature type="active site" evidence="2">
    <location>
        <position position="578"/>
    </location>
</feature>
<accession>Q6GDN2</accession>
<protein>
    <recommendedName>
        <fullName>O-acetyltransferase OatA</fullName>
        <ecNumber evidence="2">2.3.1.-</ecNumber>
    </recommendedName>
</protein>
<sequence length="603" mass="69157">MDTKDFKRLEKMYSPRYLPGLDGLRAFAVIGIIIYHLNAQWLSGGFLGVDTFFVISGYLITSLLISEYYRTQKIDLLEFWKRRLKRLIPAVLFLICVVLTFTLIFKPELIIQMKRDAIAAIFYVSNWWYISQNVDYFNQFAIEPLKHLWSLAIEEQFYLLFPLVITFLLHRFKPRNIIQTLFIVSLISLGLMIVIHFITGDNSRVYFGTDTRLQTLLLGCILAFIWPPFALKKDISKKIVVSLDIIGISGFAVLMTLFFIVGDQDQWIYNGGFYIISFATLFIIAIAVHPSSLFAKFLSMKPLLIIGKRSYSLYLWHYPIIVFVNSYYVQGQIPVYVYIIEILLTALMAEISYRFIETPIRKKGFKAFAFLPKKKSQFARTVLVILLLIPSIIVLSGQFDALGKQHEAEKKEKKTEFKTTKKKVVKKDKQEDKQTANSKEDIKKSSPLLIGDSVMVDIGNVFTKKIPNAQIDGKVGRQLVDATPIVKSQYKDYAKKGQKVVVELGTNGAFTKDQLNELLDSFGKADIYLVSIRVPRDYEGRINKLIYEAAEKRSNVHLVDWYKASAGHPEYFAYDGIHLEYAGSKALTDLIVKTMETHATNKK</sequence>
<proteinExistence type="inferred from homology"/>
<keyword id="KW-0012">Acyltransferase</keyword>
<keyword id="KW-1003">Cell membrane</keyword>
<keyword id="KW-0472">Membrane</keyword>
<keyword id="KW-0808">Transferase</keyword>
<keyword id="KW-0812">Transmembrane</keyword>
<keyword id="KW-1133">Transmembrane helix</keyword>
<reference key="1">
    <citation type="journal article" date="2004" name="Proc. Natl. Acad. Sci. U.S.A.">
        <title>Complete genomes of two clinical Staphylococcus aureus strains: evidence for the rapid evolution of virulence and drug resistance.</title>
        <authorList>
            <person name="Holden M.T.G."/>
            <person name="Feil E.J."/>
            <person name="Lindsay J.A."/>
            <person name="Peacock S.J."/>
            <person name="Day N.P.J."/>
            <person name="Enright M.C."/>
            <person name="Foster T.J."/>
            <person name="Moore C.E."/>
            <person name="Hurst L."/>
            <person name="Atkin R."/>
            <person name="Barron A."/>
            <person name="Bason N."/>
            <person name="Bentley S.D."/>
            <person name="Chillingworth C."/>
            <person name="Chillingworth T."/>
            <person name="Churcher C."/>
            <person name="Clark L."/>
            <person name="Corton C."/>
            <person name="Cronin A."/>
            <person name="Doggett J."/>
            <person name="Dowd L."/>
            <person name="Feltwell T."/>
            <person name="Hance Z."/>
            <person name="Harris B."/>
            <person name="Hauser H."/>
            <person name="Holroyd S."/>
            <person name="Jagels K."/>
            <person name="James K.D."/>
            <person name="Lennard N."/>
            <person name="Line A."/>
            <person name="Mayes R."/>
            <person name="Moule S."/>
            <person name="Mungall K."/>
            <person name="Ormond D."/>
            <person name="Quail M.A."/>
            <person name="Rabbinowitsch E."/>
            <person name="Rutherford K.M."/>
            <person name="Sanders M."/>
            <person name="Sharp S."/>
            <person name="Simmonds M."/>
            <person name="Stevens K."/>
            <person name="Whitehead S."/>
            <person name="Barrell B.G."/>
            <person name="Spratt B.G."/>
            <person name="Parkhill J."/>
        </authorList>
    </citation>
    <scope>NUCLEOTIDE SEQUENCE [LARGE SCALE GENOMIC DNA]</scope>
    <source>
        <strain>MRSA252</strain>
    </source>
</reference>
<name>OATA_STAAR</name>
<organism>
    <name type="scientific">Staphylococcus aureus (strain MRSA252)</name>
    <dbReference type="NCBI Taxonomy" id="282458"/>
    <lineage>
        <taxon>Bacteria</taxon>
        <taxon>Bacillati</taxon>
        <taxon>Bacillota</taxon>
        <taxon>Bacilli</taxon>
        <taxon>Bacillales</taxon>
        <taxon>Staphylococcaceae</taxon>
        <taxon>Staphylococcus</taxon>
    </lineage>
</organism>
<comment type="function">
    <text evidence="2">Responsible for O-acetylation at the C(6)-hydroxyl group of N-acetylmuramyl residues, forming the corresponding N,6-O-diacetylmuramic acid of the peptidoglycan. O-acetylation of the peptidoglycan is the major determinant for lysozyme resistance.</text>
</comment>
<comment type="subcellular location">
    <subcellularLocation>
        <location evidence="1">Cell membrane</location>
        <topology evidence="1">Multi-pass membrane protein</topology>
    </subcellularLocation>
</comment>
<comment type="similarity">
    <text evidence="4">Belongs to the acyltransferase 3 family.</text>
</comment>
<gene>
    <name type="primary">oatA</name>
    <name type="ordered locus">SAR2649</name>
</gene>
<dbReference type="EC" id="2.3.1.-" evidence="2"/>
<dbReference type="EMBL" id="BX571856">
    <property type="protein sequence ID" value="CAG41626.1"/>
    <property type="molecule type" value="Genomic_DNA"/>
</dbReference>
<dbReference type="RefSeq" id="WP_000379825.1">
    <property type="nucleotide sequence ID" value="NC_002952.2"/>
</dbReference>
<dbReference type="SMR" id="Q6GDN2"/>
<dbReference type="KEGG" id="sar:SAR2649"/>
<dbReference type="HOGENOM" id="CLU_005679_11_2_9"/>
<dbReference type="Proteomes" id="UP000000596">
    <property type="component" value="Chromosome"/>
</dbReference>
<dbReference type="GO" id="GO:0005886">
    <property type="term" value="C:plasma membrane"/>
    <property type="evidence" value="ECO:0007669"/>
    <property type="project" value="UniProtKB-SubCell"/>
</dbReference>
<dbReference type="GO" id="GO:0016747">
    <property type="term" value="F:acyltransferase activity, transferring groups other than amino-acyl groups"/>
    <property type="evidence" value="ECO:0007669"/>
    <property type="project" value="InterPro"/>
</dbReference>
<dbReference type="GO" id="GO:0009103">
    <property type="term" value="P:lipopolysaccharide biosynthetic process"/>
    <property type="evidence" value="ECO:0007669"/>
    <property type="project" value="TreeGrafter"/>
</dbReference>
<dbReference type="CDD" id="cd01840">
    <property type="entry name" value="SGNH_hydrolase_yrhL_like"/>
    <property type="match status" value="1"/>
</dbReference>
<dbReference type="FunFam" id="3.40.50.1110:FF:000006">
    <property type="entry name" value="O-acetyltransferase OatA"/>
    <property type="match status" value="1"/>
</dbReference>
<dbReference type="Gene3D" id="3.40.50.1110">
    <property type="entry name" value="SGNH hydrolase"/>
    <property type="match status" value="1"/>
</dbReference>
<dbReference type="InterPro" id="IPR002656">
    <property type="entry name" value="Acyl_transf_3_dom"/>
</dbReference>
<dbReference type="InterPro" id="IPR050879">
    <property type="entry name" value="Acyltransferase_3"/>
</dbReference>
<dbReference type="InterPro" id="IPR036514">
    <property type="entry name" value="SGNH_hydro_sf"/>
</dbReference>
<dbReference type="PANTHER" id="PTHR23028">
    <property type="entry name" value="ACETYLTRANSFERASE"/>
    <property type="match status" value="1"/>
</dbReference>
<dbReference type="PANTHER" id="PTHR23028:SF53">
    <property type="entry name" value="ACYL_TRANSF_3 DOMAIN-CONTAINING PROTEIN"/>
    <property type="match status" value="1"/>
</dbReference>
<dbReference type="Pfam" id="PF01757">
    <property type="entry name" value="Acyl_transf_3"/>
    <property type="match status" value="1"/>
</dbReference>
<dbReference type="SUPFAM" id="SSF52266">
    <property type="entry name" value="SGNH hydrolase"/>
    <property type="match status" value="1"/>
</dbReference>
<evidence type="ECO:0000250" key="1"/>
<evidence type="ECO:0000250" key="2">
    <source>
        <dbReference type="UniProtKB" id="Q2FV54"/>
    </source>
</evidence>
<evidence type="ECO:0000255" key="3"/>
<evidence type="ECO:0000305" key="4"/>